<proteinExistence type="inferred from homology"/>
<protein>
    <recommendedName>
        <fullName evidence="1">Glutamate-1-semialdehyde 2,1-aminomutase 1</fullName>
        <shortName evidence="1">GSA 1</shortName>
        <ecNumber evidence="1">5.4.3.8</ecNumber>
    </recommendedName>
    <alternativeName>
        <fullName evidence="1">Glutamate-1-semialdehyde aminotransferase 1</fullName>
        <shortName evidence="1">GSA-AT 1</shortName>
    </alternativeName>
</protein>
<evidence type="ECO:0000255" key="1">
    <source>
        <dbReference type="HAMAP-Rule" id="MF_00375"/>
    </source>
</evidence>
<keyword id="KW-0963">Cytoplasm</keyword>
<keyword id="KW-0413">Isomerase</keyword>
<keyword id="KW-0627">Porphyrin biosynthesis</keyword>
<keyword id="KW-0663">Pyridoxal phosphate</keyword>
<reference key="1">
    <citation type="journal article" date="2005" name="J. Bacteriol.">
        <title>Insights on evolution of virulence and resistance from the complete genome analysis of an early methicillin-resistant Staphylococcus aureus strain and a biofilm-producing methicillin-resistant Staphylococcus epidermidis strain.</title>
        <authorList>
            <person name="Gill S.R."/>
            <person name="Fouts D.E."/>
            <person name="Archer G.L."/>
            <person name="Mongodin E.F."/>
            <person name="DeBoy R.T."/>
            <person name="Ravel J."/>
            <person name="Paulsen I.T."/>
            <person name="Kolonay J.F."/>
            <person name="Brinkac L.M."/>
            <person name="Beanan M.J."/>
            <person name="Dodson R.J."/>
            <person name="Daugherty S.C."/>
            <person name="Madupu R."/>
            <person name="Angiuoli S.V."/>
            <person name="Durkin A.S."/>
            <person name="Haft D.H."/>
            <person name="Vamathevan J.J."/>
            <person name="Khouri H."/>
            <person name="Utterback T.R."/>
            <person name="Lee C."/>
            <person name="Dimitrov G."/>
            <person name="Jiang L."/>
            <person name="Qin H."/>
            <person name="Weidman J."/>
            <person name="Tran K."/>
            <person name="Kang K.H."/>
            <person name="Hance I.R."/>
            <person name="Nelson K.E."/>
            <person name="Fraser C.M."/>
        </authorList>
    </citation>
    <scope>NUCLEOTIDE SEQUENCE [LARGE SCALE GENOMIC DNA]</scope>
    <source>
        <strain>COL</strain>
    </source>
</reference>
<gene>
    <name evidence="1" type="primary">hemL1</name>
    <name type="ordered locus">SACOL1714</name>
</gene>
<organism>
    <name type="scientific">Staphylococcus aureus (strain COL)</name>
    <dbReference type="NCBI Taxonomy" id="93062"/>
    <lineage>
        <taxon>Bacteria</taxon>
        <taxon>Bacillati</taxon>
        <taxon>Bacillota</taxon>
        <taxon>Bacilli</taxon>
        <taxon>Bacillales</taxon>
        <taxon>Staphylococcaceae</taxon>
        <taxon>Staphylococcus</taxon>
    </lineage>
</organism>
<dbReference type="EC" id="5.4.3.8" evidence="1"/>
<dbReference type="EMBL" id="CP000046">
    <property type="protein sequence ID" value="AAW36819.1"/>
    <property type="molecule type" value="Genomic_DNA"/>
</dbReference>
<dbReference type="SMR" id="Q5HFA5"/>
<dbReference type="KEGG" id="sac:SACOL1714"/>
<dbReference type="HOGENOM" id="CLU_016922_1_5_9"/>
<dbReference type="UniPathway" id="UPA00251">
    <property type="reaction ID" value="UER00317"/>
</dbReference>
<dbReference type="Proteomes" id="UP000000530">
    <property type="component" value="Chromosome"/>
</dbReference>
<dbReference type="GO" id="GO:0005737">
    <property type="term" value="C:cytoplasm"/>
    <property type="evidence" value="ECO:0007669"/>
    <property type="project" value="UniProtKB-SubCell"/>
</dbReference>
<dbReference type="GO" id="GO:0042286">
    <property type="term" value="F:glutamate-1-semialdehyde 2,1-aminomutase activity"/>
    <property type="evidence" value="ECO:0007669"/>
    <property type="project" value="UniProtKB-UniRule"/>
</dbReference>
<dbReference type="GO" id="GO:0030170">
    <property type="term" value="F:pyridoxal phosphate binding"/>
    <property type="evidence" value="ECO:0007669"/>
    <property type="project" value="InterPro"/>
</dbReference>
<dbReference type="GO" id="GO:0008483">
    <property type="term" value="F:transaminase activity"/>
    <property type="evidence" value="ECO:0007669"/>
    <property type="project" value="InterPro"/>
</dbReference>
<dbReference type="GO" id="GO:0006782">
    <property type="term" value="P:protoporphyrinogen IX biosynthetic process"/>
    <property type="evidence" value="ECO:0007669"/>
    <property type="project" value="UniProtKB-UniRule"/>
</dbReference>
<dbReference type="CDD" id="cd00610">
    <property type="entry name" value="OAT_like"/>
    <property type="match status" value="1"/>
</dbReference>
<dbReference type="FunFam" id="3.40.640.10:FF:000021">
    <property type="entry name" value="Glutamate-1-semialdehyde 2,1-aminomutase"/>
    <property type="match status" value="1"/>
</dbReference>
<dbReference type="Gene3D" id="3.90.1150.10">
    <property type="entry name" value="Aspartate Aminotransferase, domain 1"/>
    <property type="match status" value="1"/>
</dbReference>
<dbReference type="Gene3D" id="3.40.640.10">
    <property type="entry name" value="Type I PLP-dependent aspartate aminotransferase-like (Major domain)"/>
    <property type="match status" value="1"/>
</dbReference>
<dbReference type="HAMAP" id="MF_00375">
    <property type="entry name" value="HemL_aminotrans_3"/>
    <property type="match status" value="1"/>
</dbReference>
<dbReference type="InterPro" id="IPR004639">
    <property type="entry name" value="4pyrrol_synth_GluAld_NH2Trfase"/>
</dbReference>
<dbReference type="InterPro" id="IPR005814">
    <property type="entry name" value="Aminotrans_3"/>
</dbReference>
<dbReference type="InterPro" id="IPR049704">
    <property type="entry name" value="Aminotrans_3_PPA_site"/>
</dbReference>
<dbReference type="InterPro" id="IPR015424">
    <property type="entry name" value="PyrdxlP-dep_Trfase"/>
</dbReference>
<dbReference type="InterPro" id="IPR015421">
    <property type="entry name" value="PyrdxlP-dep_Trfase_major"/>
</dbReference>
<dbReference type="InterPro" id="IPR015422">
    <property type="entry name" value="PyrdxlP-dep_Trfase_small"/>
</dbReference>
<dbReference type="NCBIfam" id="TIGR00713">
    <property type="entry name" value="hemL"/>
    <property type="match status" value="1"/>
</dbReference>
<dbReference type="NCBIfam" id="NF000818">
    <property type="entry name" value="PRK00062.1"/>
    <property type="match status" value="1"/>
</dbReference>
<dbReference type="PANTHER" id="PTHR43713">
    <property type="entry name" value="GLUTAMATE-1-SEMIALDEHYDE 2,1-AMINOMUTASE"/>
    <property type="match status" value="1"/>
</dbReference>
<dbReference type="PANTHER" id="PTHR43713:SF3">
    <property type="entry name" value="GLUTAMATE-1-SEMIALDEHYDE 2,1-AMINOMUTASE 1, CHLOROPLASTIC-RELATED"/>
    <property type="match status" value="1"/>
</dbReference>
<dbReference type="Pfam" id="PF00202">
    <property type="entry name" value="Aminotran_3"/>
    <property type="match status" value="1"/>
</dbReference>
<dbReference type="SUPFAM" id="SSF53383">
    <property type="entry name" value="PLP-dependent transferases"/>
    <property type="match status" value="1"/>
</dbReference>
<dbReference type="PROSITE" id="PS00600">
    <property type="entry name" value="AA_TRANSFER_CLASS_3"/>
    <property type="match status" value="1"/>
</dbReference>
<sequence>MRYTKSEEAMKVAETLMPGGVNSPVRAFKSVDTPAIFMDHGKGSKIYDIDGNEYIDYVLSWGPLILGHRDPQVISHLHEAIDKGTSFGASTLLENKLAQLVIDRVPSIEKVRMVSSGTEATLDTLRLARGYTGRNKIVKFEGCYHGHSDSLLIKAGSGVATLGLPDSPGVPEGIAKNTITVPYNDLDALKIAFEKFGNDIAGVIVEPVAGNMGVVPPIEGFLQGLRDITTEYGALLIFDEVMTGFRVGYHCAQGYFGVTPDLTCLGKVIGGGLPVGAFGGKKEIMDHIAPLGNIYQAGTLSGNPLAMTSGYETLSQLTPETYEYFNMLGDILEDGLKRVFAKHNVPITVNRAGSMIGYFLNEGPVTNFEQANKSDLKLFAEMYREMAKEGVFLPPSQFEGTFLSTAHTKEDIEKTIQAFDTALSRIVK</sequence>
<accession>Q5HFA5</accession>
<name>GSA1_STAAC</name>
<feature type="chain" id="PRO_0000120441" description="Glutamate-1-semialdehyde 2,1-aminomutase 1">
    <location>
        <begin position="1"/>
        <end position="428"/>
    </location>
</feature>
<feature type="modified residue" description="N6-(pyridoxal phosphate)lysine" evidence="1">
    <location>
        <position position="267"/>
    </location>
</feature>
<comment type="catalytic activity">
    <reaction evidence="1">
        <text>(S)-4-amino-5-oxopentanoate = 5-aminolevulinate</text>
        <dbReference type="Rhea" id="RHEA:14265"/>
        <dbReference type="ChEBI" id="CHEBI:57501"/>
        <dbReference type="ChEBI" id="CHEBI:356416"/>
        <dbReference type="EC" id="5.4.3.8"/>
    </reaction>
</comment>
<comment type="cofactor">
    <cofactor evidence="1">
        <name>pyridoxal 5'-phosphate</name>
        <dbReference type="ChEBI" id="CHEBI:597326"/>
    </cofactor>
</comment>
<comment type="pathway">
    <text evidence="1">Porphyrin-containing compound metabolism; protoporphyrin-IX biosynthesis; 5-aminolevulinate from L-glutamyl-tRNA(Glu): step 2/2.</text>
</comment>
<comment type="subunit">
    <text evidence="1">Homodimer.</text>
</comment>
<comment type="subcellular location">
    <subcellularLocation>
        <location evidence="1">Cytoplasm</location>
    </subcellularLocation>
</comment>
<comment type="similarity">
    <text evidence="1">Belongs to the class-III pyridoxal-phosphate-dependent aminotransferase family. HemL subfamily.</text>
</comment>